<dbReference type="EMBL" id="CP001016">
    <property type="protein sequence ID" value="ACB94999.1"/>
    <property type="molecule type" value="Genomic_DNA"/>
</dbReference>
<dbReference type="RefSeq" id="WP_012384356.1">
    <property type="nucleotide sequence ID" value="NC_010581.1"/>
</dbReference>
<dbReference type="SMR" id="B2IK67"/>
<dbReference type="STRING" id="395963.Bind_1359"/>
<dbReference type="KEGG" id="bid:Bind_1359"/>
<dbReference type="eggNOG" id="COG0091">
    <property type="taxonomic scope" value="Bacteria"/>
</dbReference>
<dbReference type="HOGENOM" id="CLU_083987_3_0_5"/>
<dbReference type="OrthoDB" id="9805969at2"/>
<dbReference type="Proteomes" id="UP000001695">
    <property type="component" value="Chromosome"/>
</dbReference>
<dbReference type="GO" id="GO:0022625">
    <property type="term" value="C:cytosolic large ribosomal subunit"/>
    <property type="evidence" value="ECO:0007669"/>
    <property type="project" value="TreeGrafter"/>
</dbReference>
<dbReference type="GO" id="GO:0019843">
    <property type="term" value="F:rRNA binding"/>
    <property type="evidence" value="ECO:0007669"/>
    <property type="project" value="UniProtKB-UniRule"/>
</dbReference>
<dbReference type="GO" id="GO:0003735">
    <property type="term" value="F:structural constituent of ribosome"/>
    <property type="evidence" value="ECO:0007669"/>
    <property type="project" value="InterPro"/>
</dbReference>
<dbReference type="GO" id="GO:0006412">
    <property type="term" value="P:translation"/>
    <property type="evidence" value="ECO:0007669"/>
    <property type="project" value="UniProtKB-UniRule"/>
</dbReference>
<dbReference type="CDD" id="cd00336">
    <property type="entry name" value="Ribosomal_L22"/>
    <property type="match status" value="1"/>
</dbReference>
<dbReference type="Gene3D" id="3.90.470.10">
    <property type="entry name" value="Ribosomal protein L22/L17"/>
    <property type="match status" value="1"/>
</dbReference>
<dbReference type="HAMAP" id="MF_01331_B">
    <property type="entry name" value="Ribosomal_uL22_B"/>
    <property type="match status" value="1"/>
</dbReference>
<dbReference type="InterPro" id="IPR001063">
    <property type="entry name" value="Ribosomal_uL22"/>
</dbReference>
<dbReference type="InterPro" id="IPR005727">
    <property type="entry name" value="Ribosomal_uL22_bac/chlpt-type"/>
</dbReference>
<dbReference type="InterPro" id="IPR047867">
    <property type="entry name" value="Ribosomal_uL22_bac/org-type"/>
</dbReference>
<dbReference type="InterPro" id="IPR018260">
    <property type="entry name" value="Ribosomal_uL22_CS"/>
</dbReference>
<dbReference type="InterPro" id="IPR036394">
    <property type="entry name" value="Ribosomal_uL22_sf"/>
</dbReference>
<dbReference type="NCBIfam" id="TIGR01044">
    <property type="entry name" value="rplV_bact"/>
    <property type="match status" value="1"/>
</dbReference>
<dbReference type="PANTHER" id="PTHR13501">
    <property type="entry name" value="CHLOROPLAST 50S RIBOSOMAL PROTEIN L22-RELATED"/>
    <property type="match status" value="1"/>
</dbReference>
<dbReference type="PANTHER" id="PTHR13501:SF8">
    <property type="entry name" value="LARGE RIBOSOMAL SUBUNIT PROTEIN UL22M"/>
    <property type="match status" value="1"/>
</dbReference>
<dbReference type="Pfam" id="PF00237">
    <property type="entry name" value="Ribosomal_L22"/>
    <property type="match status" value="1"/>
</dbReference>
<dbReference type="SUPFAM" id="SSF54843">
    <property type="entry name" value="Ribosomal protein L22"/>
    <property type="match status" value="1"/>
</dbReference>
<dbReference type="PROSITE" id="PS00464">
    <property type="entry name" value="RIBOSOMAL_L22"/>
    <property type="match status" value="1"/>
</dbReference>
<evidence type="ECO:0000255" key="1">
    <source>
        <dbReference type="HAMAP-Rule" id="MF_01331"/>
    </source>
</evidence>
<evidence type="ECO:0000305" key="2"/>
<gene>
    <name evidence="1" type="primary">rplV</name>
    <name type="ordered locus">Bind_1359</name>
</gene>
<sequence>MSKEKTPRSLGDNEAKAVARMLRVSPQKLNLVAQLIRGKKVDKALADLEFSRKRIAYDVKKTLESAIANAENNHSLDVDDLIVAEAFVGKAMVMKRFSPRARGRSGRIEKPFAHLTIVVREVTAVAAGA</sequence>
<name>RL22_BEII9</name>
<accession>B2IK67</accession>
<proteinExistence type="inferred from homology"/>
<organism>
    <name type="scientific">Beijerinckia indica subsp. indica (strain ATCC 9039 / DSM 1715 / NCIMB 8712)</name>
    <dbReference type="NCBI Taxonomy" id="395963"/>
    <lineage>
        <taxon>Bacteria</taxon>
        <taxon>Pseudomonadati</taxon>
        <taxon>Pseudomonadota</taxon>
        <taxon>Alphaproteobacteria</taxon>
        <taxon>Hyphomicrobiales</taxon>
        <taxon>Beijerinckiaceae</taxon>
        <taxon>Beijerinckia</taxon>
    </lineage>
</organism>
<protein>
    <recommendedName>
        <fullName evidence="1">Large ribosomal subunit protein uL22</fullName>
    </recommendedName>
    <alternativeName>
        <fullName evidence="2">50S ribosomal protein L22</fullName>
    </alternativeName>
</protein>
<reference key="1">
    <citation type="journal article" date="2010" name="J. Bacteriol.">
        <title>Complete genome sequence of Beijerinckia indica subsp. indica.</title>
        <authorList>
            <person name="Tamas I."/>
            <person name="Dedysh S.N."/>
            <person name="Liesack W."/>
            <person name="Stott M.B."/>
            <person name="Alam M."/>
            <person name="Murrell J.C."/>
            <person name="Dunfield P.F."/>
        </authorList>
    </citation>
    <scope>NUCLEOTIDE SEQUENCE [LARGE SCALE GENOMIC DNA]</scope>
    <source>
        <strain>ATCC 9039 / DSM 1715 / NCIMB 8712</strain>
    </source>
</reference>
<keyword id="KW-1185">Reference proteome</keyword>
<keyword id="KW-0687">Ribonucleoprotein</keyword>
<keyword id="KW-0689">Ribosomal protein</keyword>
<keyword id="KW-0694">RNA-binding</keyword>
<keyword id="KW-0699">rRNA-binding</keyword>
<feature type="chain" id="PRO_1000142232" description="Large ribosomal subunit protein uL22">
    <location>
        <begin position="1"/>
        <end position="129"/>
    </location>
</feature>
<comment type="function">
    <text evidence="1">This protein binds specifically to 23S rRNA; its binding is stimulated by other ribosomal proteins, e.g. L4, L17, and L20. It is important during the early stages of 50S assembly. It makes multiple contacts with different domains of the 23S rRNA in the assembled 50S subunit and ribosome (By similarity).</text>
</comment>
<comment type="function">
    <text evidence="1">The globular domain of the protein is located near the polypeptide exit tunnel on the outside of the subunit, while an extended beta-hairpin is found that lines the wall of the exit tunnel in the center of the 70S ribosome.</text>
</comment>
<comment type="subunit">
    <text evidence="1">Part of the 50S ribosomal subunit.</text>
</comment>
<comment type="similarity">
    <text evidence="1">Belongs to the universal ribosomal protein uL22 family.</text>
</comment>